<feature type="chain" id="PRO_0000299241" description="Matrix protein">
    <location>
        <begin position="1"/>
        <end position="189"/>
    </location>
</feature>
<protein>
    <recommendedName>
        <fullName>Matrix protein</fullName>
    </recommendedName>
</protein>
<comment type="function">
    <text evidence="1">Plays a major role in assembly and budding of virion. Completely covers the ribonucleoprotein coil and keep it in condensed bullet-shaped form. Inhibits viral transcription and stimulates replication (By similarity).</text>
</comment>
<comment type="subunit">
    <text evidence="1">Homomultimer. Interacts with nucleoprotein and with the cytoplasmic domain of glycoprotein (By similarity).</text>
</comment>
<comment type="subcellular location">
    <subcellularLocation>
        <location>Virion membrane</location>
        <topology>Peripheral membrane protein</topology>
    </subcellularLocation>
    <subcellularLocation>
        <location evidence="1">Host endomembrane system</location>
        <topology evidence="1">Peripheral membrane protein</topology>
    </subcellularLocation>
</comment>
<comment type="miscellaneous">
    <text evidence="1">Most abundant protein in the virion.</text>
</comment>
<comment type="similarity">
    <text evidence="2">Belongs to the novirhabdovirus matrix protein family.</text>
</comment>
<sequence length="189" mass="20560">MPFIRRPKRAILIPPLHLTLKDDDKVLVVETVGTLIISGMTPSNLTEKLGLAMKLASAILGGDSHPAFNPLVEIFSGAMEFGASVEKLDFMTRENKVITTYKVARGKAVALSNFPMEKRVGEKSYTTQIRNGSITYTGSFLFSAEHVGLKDNRSLFAAGEGLRESPDMAQAREAFAGSLPKGKNESSRK</sequence>
<organismHost>
    <name type="scientific">Gobiosoma bosc</name>
    <name type="common">Naked goby</name>
    <name type="synonym">Gobius bosc</name>
    <dbReference type="NCBI Taxonomy" id="203314"/>
</organismHost>
<organism>
    <name type="scientific">Snakehead rhabdovirus</name>
    <name type="common">SHRV</name>
    <dbReference type="NCBI Taxonomy" id="103603"/>
    <lineage>
        <taxon>Viruses</taxon>
        <taxon>Riboviria</taxon>
        <taxon>Orthornavirae</taxon>
        <taxon>Negarnaviricota</taxon>
        <taxon>Haploviricotina</taxon>
        <taxon>Monjiviricetes</taxon>
        <taxon>Mononegavirales</taxon>
        <taxon>Rhabdoviridae</taxon>
        <taxon>Gammarhabdovirinae</taxon>
        <taxon>Novirhabdovirus</taxon>
        <taxon>Novirhabdovirus snakehead</taxon>
    </lineage>
</organism>
<accession>Q9QJT7</accession>
<reference key="1">
    <citation type="submission" date="1999-05" db="EMBL/GenBank/DDBJ databases">
        <title>The complete genomic sequence of snakehead rhabdovirus.</title>
        <authorList>
            <person name="Johnson M.C."/>
            <person name="Bell R.H."/>
            <person name="Leong J.C."/>
        </authorList>
    </citation>
    <scope>NUCLEOTIDE SEQUENCE [GENOMIC RNA]</scope>
</reference>
<evidence type="ECO:0000250" key="1"/>
<evidence type="ECO:0000305" key="2"/>
<keyword id="KW-0053">Apoptosis</keyword>
<keyword id="KW-1043">Host membrane</keyword>
<keyword id="KW-0472">Membrane</keyword>
<keyword id="KW-1185">Reference proteome</keyword>
<keyword id="KW-0261">Viral envelope protein</keyword>
<keyword id="KW-0468">Viral matrix protein</keyword>
<keyword id="KW-0946">Virion</keyword>
<name>MATRX_SHRV</name>
<gene>
    <name type="primary">M</name>
</gene>
<proteinExistence type="inferred from homology"/>
<dbReference type="EMBL" id="AF147498">
    <property type="protein sequence ID" value="AAD56768.1"/>
    <property type="molecule type" value="Genomic_RNA"/>
</dbReference>
<dbReference type="RefSeq" id="NP_050582.1">
    <property type="nucleotide sequence ID" value="NC_000903.1"/>
</dbReference>
<dbReference type="GeneID" id="1457771"/>
<dbReference type="KEGG" id="vg:1457771"/>
<dbReference type="OrthoDB" id="22747at10239"/>
<dbReference type="Proteomes" id="UP000007219">
    <property type="component" value="Genome"/>
</dbReference>
<dbReference type="GO" id="GO:0033645">
    <property type="term" value="C:host cell endomembrane system"/>
    <property type="evidence" value="ECO:0007669"/>
    <property type="project" value="UniProtKB-SubCell"/>
</dbReference>
<dbReference type="GO" id="GO:0016020">
    <property type="term" value="C:membrane"/>
    <property type="evidence" value="ECO:0007669"/>
    <property type="project" value="UniProtKB-KW"/>
</dbReference>
<dbReference type="GO" id="GO:0019031">
    <property type="term" value="C:viral envelope"/>
    <property type="evidence" value="ECO:0007669"/>
    <property type="project" value="UniProtKB-KW"/>
</dbReference>
<dbReference type="GO" id="GO:0055036">
    <property type="term" value="C:virion membrane"/>
    <property type="evidence" value="ECO:0007669"/>
    <property type="project" value="UniProtKB-SubCell"/>
</dbReference>
<dbReference type="GO" id="GO:0039660">
    <property type="term" value="F:structural constituent of virion"/>
    <property type="evidence" value="ECO:0007669"/>
    <property type="project" value="UniProtKB-KW"/>
</dbReference>
<dbReference type="InterPro" id="IPR005060">
    <property type="entry name" value="Rhabdo_matrix"/>
</dbReference>
<dbReference type="Pfam" id="PF03397">
    <property type="entry name" value="Rhabdo_matrix"/>
    <property type="match status" value="1"/>
</dbReference>